<proteinExistence type="inferred from homology"/>
<evidence type="ECO:0000255" key="1">
    <source>
        <dbReference type="HAMAP-Rule" id="MF_01187"/>
    </source>
</evidence>
<comment type="similarity">
    <text evidence="1">Belongs to the UPF0434 family.</text>
</comment>
<dbReference type="EMBL" id="CP000738">
    <property type="protein sequence ID" value="ABR61873.1"/>
    <property type="molecule type" value="Genomic_DNA"/>
</dbReference>
<dbReference type="RefSeq" id="WP_012067254.1">
    <property type="nucleotide sequence ID" value="NC_009636.1"/>
</dbReference>
<dbReference type="RefSeq" id="YP_001328708.1">
    <property type="nucleotide sequence ID" value="NC_009636.1"/>
</dbReference>
<dbReference type="SMR" id="A6UDZ3"/>
<dbReference type="STRING" id="366394.Smed_3047"/>
<dbReference type="KEGG" id="smd:Smed_3047"/>
<dbReference type="PATRIC" id="fig|366394.8.peg.6274"/>
<dbReference type="eggNOG" id="COG2835">
    <property type="taxonomic scope" value="Bacteria"/>
</dbReference>
<dbReference type="HOGENOM" id="CLU_155659_2_2_5"/>
<dbReference type="OrthoDB" id="9812205at2"/>
<dbReference type="Proteomes" id="UP000001108">
    <property type="component" value="Chromosome"/>
</dbReference>
<dbReference type="GO" id="GO:0005829">
    <property type="term" value="C:cytosol"/>
    <property type="evidence" value="ECO:0007669"/>
    <property type="project" value="TreeGrafter"/>
</dbReference>
<dbReference type="FunFam" id="2.20.25.10:FF:000002">
    <property type="entry name" value="UPF0434 protein YcaR"/>
    <property type="match status" value="1"/>
</dbReference>
<dbReference type="Gene3D" id="2.20.25.10">
    <property type="match status" value="1"/>
</dbReference>
<dbReference type="HAMAP" id="MF_01187">
    <property type="entry name" value="UPF0434"/>
    <property type="match status" value="1"/>
</dbReference>
<dbReference type="InterPro" id="IPR005651">
    <property type="entry name" value="Trm112-like"/>
</dbReference>
<dbReference type="PANTHER" id="PTHR33505:SF4">
    <property type="entry name" value="PROTEIN PREY, MITOCHONDRIAL"/>
    <property type="match status" value="1"/>
</dbReference>
<dbReference type="PANTHER" id="PTHR33505">
    <property type="entry name" value="ZGC:162634"/>
    <property type="match status" value="1"/>
</dbReference>
<dbReference type="Pfam" id="PF03966">
    <property type="entry name" value="Trm112p"/>
    <property type="match status" value="1"/>
</dbReference>
<dbReference type="SUPFAM" id="SSF158997">
    <property type="entry name" value="Trm112p-like"/>
    <property type="match status" value="1"/>
</dbReference>
<name>Y3047_SINMW</name>
<gene>
    <name type="ordered locus">Smed_3047</name>
</gene>
<organism>
    <name type="scientific">Sinorhizobium medicae (strain WSM419)</name>
    <name type="common">Ensifer medicae</name>
    <dbReference type="NCBI Taxonomy" id="366394"/>
    <lineage>
        <taxon>Bacteria</taxon>
        <taxon>Pseudomonadati</taxon>
        <taxon>Pseudomonadota</taxon>
        <taxon>Alphaproteobacteria</taxon>
        <taxon>Hyphomicrobiales</taxon>
        <taxon>Rhizobiaceae</taxon>
        <taxon>Sinorhizobium/Ensifer group</taxon>
        <taxon>Sinorhizobium</taxon>
    </lineage>
</organism>
<accession>A6UDZ3</accession>
<feature type="chain" id="PRO_1000065857" description="UPF0434 protein Smed_3047">
    <location>
        <begin position="1"/>
        <end position="62"/>
    </location>
</feature>
<sequence>MDVNASKVDPKLLELLVCPLTKGRLSYDPEANELVSEKARLAYPIRDGVPIMLISEARKIEE</sequence>
<protein>
    <recommendedName>
        <fullName evidence="1">UPF0434 protein Smed_3047</fullName>
    </recommendedName>
</protein>
<reference key="1">
    <citation type="submission" date="2007-06" db="EMBL/GenBank/DDBJ databases">
        <title>Complete sequence of Sinorhizobium medicae WSM419 chromosome.</title>
        <authorList>
            <consortium name="US DOE Joint Genome Institute"/>
            <person name="Copeland A."/>
            <person name="Lucas S."/>
            <person name="Lapidus A."/>
            <person name="Barry K."/>
            <person name="Glavina del Rio T."/>
            <person name="Dalin E."/>
            <person name="Tice H."/>
            <person name="Pitluck S."/>
            <person name="Chain P."/>
            <person name="Malfatti S."/>
            <person name="Shin M."/>
            <person name="Vergez L."/>
            <person name="Schmutz J."/>
            <person name="Larimer F."/>
            <person name="Land M."/>
            <person name="Hauser L."/>
            <person name="Kyrpides N."/>
            <person name="Mikhailova N."/>
            <person name="Reeve W.G."/>
            <person name="Richardson P."/>
        </authorList>
    </citation>
    <scope>NUCLEOTIDE SEQUENCE [LARGE SCALE GENOMIC DNA]</scope>
    <source>
        <strain>WSM419</strain>
    </source>
</reference>